<evidence type="ECO:0000255" key="1">
    <source>
        <dbReference type="HAMAP-Rule" id="MF_00068"/>
    </source>
</evidence>
<evidence type="ECO:0000256" key="2">
    <source>
        <dbReference type="SAM" id="MobiDB-lite"/>
    </source>
</evidence>
<protein>
    <recommendedName>
        <fullName evidence="1">N-acetylmuramic acid 6-phosphate etherase</fullName>
        <shortName evidence="1">MurNAc-6-P etherase</shortName>
        <ecNumber evidence="1">4.2.1.126</ecNumber>
    </recommendedName>
    <alternativeName>
        <fullName evidence="1">N-acetylmuramic acid 6-phosphate hydrolase</fullName>
    </alternativeName>
    <alternativeName>
        <fullName evidence="1">N-acetylmuramic acid 6-phosphate lyase</fullName>
    </alternativeName>
</protein>
<comment type="function">
    <text evidence="1">Specifically catalyzes the cleavage of the D-lactyl ether substituent of MurNAc 6-phosphate, producing GlcNAc 6-phosphate and D-lactate.</text>
</comment>
<comment type="catalytic activity">
    <reaction evidence="1">
        <text>N-acetyl-D-muramate 6-phosphate + H2O = N-acetyl-D-glucosamine 6-phosphate + (R)-lactate</text>
        <dbReference type="Rhea" id="RHEA:26410"/>
        <dbReference type="ChEBI" id="CHEBI:15377"/>
        <dbReference type="ChEBI" id="CHEBI:16004"/>
        <dbReference type="ChEBI" id="CHEBI:57513"/>
        <dbReference type="ChEBI" id="CHEBI:58722"/>
        <dbReference type="EC" id="4.2.1.126"/>
    </reaction>
</comment>
<comment type="pathway">
    <text evidence="1">Amino-sugar metabolism; N-acetylmuramate degradation.</text>
</comment>
<comment type="subunit">
    <text evidence="1">Homodimer.</text>
</comment>
<comment type="miscellaneous">
    <text evidence="1">A lyase-type mechanism (elimination/hydration) is suggested for the cleavage of the lactyl ether bond of MurNAc 6-phosphate, with the formation of an alpha,beta-unsaturated aldehyde intermediate with (E)-stereochemistry, followed by the syn addition of water to give product.</text>
</comment>
<comment type="similarity">
    <text evidence="1">Belongs to the GCKR-like family. MurNAc-6-P etherase subfamily.</text>
</comment>
<accession>Q1J3J3</accession>
<organism>
    <name type="scientific">Deinococcus geothermalis (strain DSM 11300 / CIP 105573 / AG-3a)</name>
    <dbReference type="NCBI Taxonomy" id="319795"/>
    <lineage>
        <taxon>Bacteria</taxon>
        <taxon>Thermotogati</taxon>
        <taxon>Deinococcota</taxon>
        <taxon>Deinococci</taxon>
        <taxon>Deinococcales</taxon>
        <taxon>Deinococcaceae</taxon>
        <taxon>Deinococcus</taxon>
    </lineage>
</organism>
<name>MURQ_DEIGD</name>
<geneLocation type="plasmid">
    <name>pDGEO01</name>
</geneLocation>
<feature type="chain" id="PRO_0000249618" description="N-acetylmuramic acid 6-phosphate etherase">
    <location>
        <begin position="1"/>
        <end position="305"/>
    </location>
</feature>
<feature type="domain" description="SIS" evidence="1">
    <location>
        <begin position="62"/>
        <end position="225"/>
    </location>
</feature>
<feature type="region of interest" description="Disordered" evidence="2">
    <location>
        <begin position="1"/>
        <end position="24"/>
    </location>
</feature>
<feature type="compositionally biased region" description="Basic and acidic residues" evidence="2">
    <location>
        <begin position="11"/>
        <end position="24"/>
    </location>
</feature>
<feature type="active site" description="Proton donor" evidence="1">
    <location>
        <position position="90"/>
    </location>
</feature>
<feature type="active site" evidence="1">
    <location>
        <position position="121"/>
    </location>
</feature>
<gene>
    <name evidence="1" type="primary">murQ</name>
    <name type="ordered locus">Dgeo_2507</name>
</gene>
<sequence>MTTPPSSPLSDPRRTEGVHPTHTDLDRLDPLALVQVFTDDQRAAVEAVRAAVPALARAVEAALPRLERGGRLVYVGAGTSGRLAVLDATELTPTFSWPPERAVPLIAGGERAIRQAVEGAEDDAEAGAADVRAAGTGPQDVLIALAASGTTPYVLGAVRAARALGALTIGLANNPGTPLLAAAECPILLDTGPEVISGSTRLKAGTAQKIALNTLSSALMVRLGKVYGNLMVDVKVSNAKLETRALRLTCHATGASEAEARAALAQAGGRVKTALVMLRLGLSAPEAEVRLQAAGGHARVALGEG</sequence>
<reference key="1">
    <citation type="submission" date="2006-04" db="EMBL/GenBank/DDBJ databases">
        <title>Complete sequence of plasmid 1 of Deinococcus geothermalis DSM 11300.</title>
        <authorList>
            <person name="Copeland A."/>
            <person name="Lucas S."/>
            <person name="Lapidus A."/>
            <person name="Barry K."/>
            <person name="Detter J.C."/>
            <person name="Glavina del Rio T."/>
            <person name="Hammon N."/>
            <person name="Israni S."/>
            <person name="Dalin E."/>
            <person name="Tice H."/>
            <person name="Pitluck S."/>
            <person name="Brettin T."/>
            <person name="Bruce D."/>
            <person name="Han C."/>
            <person name="Tapia R."/>
            <person name="Saunders E."/>
            <person name="Gilna P."/>
            <person name="Schmutz J."/>
            <person name="Larimer F."/>
            <person name="Land M."/>
            <person name="Hauser L."/>
            <person name="Kyrpides N."/>
            <person name="Kim E."/>
            <person name="Daly M.J."/>
            <person name="Fredrickson J.K."/>
            <person name="Makarova K.S."/>
            <person name="Gaidamakova E.K."/>
            <person name="Zhai M."/>
            <person name="Richardson P."/>
        </authorList>
    </citation>
    <scope>NUCLEOTIDE SEQUENCE [LARGE SCALE GENOMIC DNA]</scope>
    <source>
        <strain>DSM 11300 / CIP 105573 / AG-3a</strain>
    </source>
</reference>
<keyword id="KW-0119">Carbohydrate metabolism</keyword>
<keyword id="KW-0456">Lyase</keyword>
<keyword id="KW-0614">Plasmid</keyword>
<dbReference type="EC" id="4.2.1.126" evidence="1"/>
<dbReference type="EMBL" id="CP000358">
    <property type="protein sequence ID" value="ABF43941.1"/>
    <property type="molecule type" value="Genomic_DNA"/>
</dbReference>
<dbReference type="RefSeq" id="WP_011526055.1">
    <property type="nucleotide sequence ID" value="NC_008010.2"/>
</dbReference>
<dbReference type="SMR" id="Q1J3J3"/>
<dbReference type="KEGG" id="dge:Dgeo_2507"/>
<dbReference type="eggNOG" id="COG2103">
    <property type="taxonomic scope" value="Bacteria"/>
</dbReference>
<dbReference type="HOGENOM" id="CLU_049049_1_1_0"/>
<dbReference type="UniPathway" id="UPA00342"/>
<dbReference type="Proteomes" id="UP000002431">
    <property type="component" value="Plasmid pDGEO01"/>
</dbReference>
<dbReference type="GO" id="GO:0097367">
    <property type="term" value="F:carbohydrate derivative binding"/>
    <property type="evidence" value="ECO:0007669"/>
    <property type="project" value="InterPro"/>
</dbReference>
<dbReference type="GO" id="GO:0016835">
    <property type="term" value="F:carbon-oxygen lyase activity"/>
    <property type="evidence" value="ECO:0007669"/>
    <property type="project" value="UniProtKB-UniRule"/>
</dbReference>
<dbReference type="GO" id="GO:0016803">
    <property type="term" value="F:ether hydrolase activity"/>
    <property type="evidence" value="ECO:0007669"/>
    <property type="project" value="TreeGrafter"/>
</dbReference>
<dbReference type="GO" id="GO:0046348">
    <property type="term" value="P:amino sugar catabolic process"/>
    <property type="evidence" value="ECO:0007669"/>
    <property type="project" value="InterPro"/>
</dbReference>
<dbReference type="GO" id="GO:0097173">
    <property type="term" value="P:N-acetylmuramic acid catabolic process"/>
    <property type="evidence" value="ECO:0007669"/>
    <property type="project" value="UniProtKB-UniPathway"/>
</dbReference>
<dbReference type="GO" id="GO:0009254">
    <property type="term" value="P:peptidoglycan turnover"/>
    <property type="evidence" value="ECO:0007669"/>
    <property type="project" value="TreeGrafter"/>
</dbReference>
<dbReference type="CDD" id="cd05007">
    <property type="entry name" value="SIS_Etherase"/>
    <property type="match status" value="1"/>
</dbReference>
<dbReference type="Gene3D" id="1.10.8.1080">
    <property type="match status" value="1"/>
</dbReference>
<dbReference type="Gene3D" id="3.40.50.10490">
    <property type="entry name" value="Glucose-6-phosphate isomerase like protein, domain 1"/>
    <property type="match status" value="1"/>
</dbReference>
<dbReference type="HAMAP" id="MF_00068">
    <property type="entry name" value="MurQ"/>
    <property type="match status" value="1"/>
</dbReference>
<dbReference type="InterPro" id="IPR005488">
    <property type="entry name" value="Etherase_MurQ"/>
</dbReference>
<dbReference type="InterPro" id="IPR005486">
    <property type="entry name" value="Glucokinase_regulatory_CS"/>
</dbReference>
<dbReference type="InterPro" id="IPR040190">
    <property type="entry name" value="MURQ/GCKR"/>
</dbReference>
<dbReference type="InterPro" id="IPR001347">
    <property type="entry name" value="SIS_dom"/>
</dbReference>
<dbReference type="InterPro" id="IPR046348">
    <property type="entry name" value="SIS_dom_sf"/>
</dbReference>
<dbReference type="NCBIfam" id="TIGR00274">
    <property type="entry name" value="N-acetylmuramic acid 6-phosphate etherase"/>
    <property type="match status" value="1"/>
</dbReference>
<dbReference type="NCBIfam" id="NF003915">
    <property type="entry name" value="PRK05441.1"/>
    <property type="match status" value="1"/>
</dbReference>
<dbReference type="NCBIfam" id="NF009222">
    <property type="entry name" value="PRK12570.1"/>
    <property type="match status" value="1"/>
</dbReference>
<dbReference type="PANTHER" id="PTHR10088">
    <property type="entry name" value="GLUCOKINASE REGULATORY PROTEIN"/>
    <property type="match status" value="1"/>
</dbReference>
<dbReference type="PANTHER" id="PTHR10088:SF4">
    <property type="entry name" value="GLUCOKINASE REGULATORY PROTEIN"/>
    <property type="match status" value="1"/>
</dbReference>
<dbReference type="Pfam" id="PF20741">
    <property type="entry name" value="GKRP-like_C"/>
    <property type="match status" value="1"/>
</dbReference>
<dbReference type="Pfam" id="PF22645">
    <property type="entry name" value="GKRP_SIS_N"/>
    <property type="match status" value="1"/>
</dbReference>
<dbReference type="SUPFAM" id="SSF53697">
    <property type="entry name" value="SIS domain"/>
    <property type="match status" value="1"/>
</dbReference>
<dbReference type="PROSITE" id="PS01272">
    <property type="entry name" value="GCKR"/>
    <property type="match status" value="1"/>
</dbReference>
<dbReference type="PROSITE" id="PS51464">
    <property type="entry name" value="SIS"/>
    <property type="match status" value="1"/>
</dbReference>
<proteinExistence type="inferred from homology"/>